<name>RS14_PSEAE</name>
<dbReference type="EMBL" id="AE004091">
    <property type="protein sequence ID" value="AAG07638.1"/>
    <property type="molecule type" value="Genomic_DNA"/>
</dbReference>
<dbReference type="PIR" id="H83114">
    <property type="entry name" value="H83114"/>
</dbReference>
<dbReference type="RefSeq" id="NP_252940.1">
    <property type="nucleotide sequence ID" value="NC_002516.2"/>
</dbReference>
<dbReference type="RefSeq" id="WP_003093701.1">
    <property type="nucleotide sequence ID" value="NZ_QZGE01000028.1"/>
</dbReference>
<dbReference type="PDB" id="7UNR">
    <property type="method" value="EM"/>
    <property type="resolution" value="2.90 A"/>
    <property type="chains" value="n=1-101"/>
</dbReference>
<dbReference type="PDB" id="7UNU">
    <property type="method" value="EM"/>
    <property type="resolution" value="2.90 A"/>
    <property type="chains" value="n=1-101"/>
</dbReference>
<dbReference type="PDB" id="7UNV">
    <property type="method" value="EM"/>
    <property type="resolution" value="2.70 A"/>
    <property type="chains" value="n=1-101"/>
</dbReference>
<dbReference type="PDB" id="7UNW">
    <property type="method" value="EM"/>
    <property type="resolution" value="2.60 A"/>
    <property type="chains" value="n=1-101"/>
</dbReference>
<dbReference type="PDB" id="8CD1">
    <property type="method" value="EM"/>
    <property type="resolution" value="3.00 A"/>
    <property type="chains" value="n=1-101"/>
</dbReference>
<dbReference type="PDB" id="8RWG">
    <property type="method" value="EM"/>
    <property type="resolution" value="2.46 A"/>
    <property type="chains" value="m=1-101"/>
</dbReference>
<dbReference type="PDBsum" id="7UNR"/>
<dbReference type="PDBsum" id="7UNU"/>
<dbReference type="PDBsum" id="7UNV"/>
<dbReference type="PDBsum" id="7UNW"/>
<dbReference type="PDBsum" id="8CD1"/>
<dbReference type="PDBsum" id="8RWG"/>
<dbReference type="EMDB" id="EMD-16566"/>
<dbReference type="EMDB" id="EMD-19547"/>
<dbReference type="EMDB" id="EMD-26630"/>
<dbReference type="EMDB" id="EMD-26633"/>
<dbReference type="EMDB" id="EMD-26634"/>
<dbReference type="EMDB" id="EMD-26635"/>
<dbReference type="SMR" id="Q9HWE8"/>
<dbReference type="FunCoup" id="Q9HWE8">
    <property type="interactions" value="823"/>
</dbReference>
<dbReference type="STRING" id="208964.PA4250"/>
<dbReference type="PaxDb" id="208964-PA4250"/>
<dbReference type="DNASU" id="881778"/>
<dbReference type="GeneID" id="77219211"/>
<dbReference type="GeneID" id="881778"/>
<dbReference type="KEGG" id="pae:PA4250"/>
<dbReference type="PATRIC" id="fig|208964.12.peg.4451"/>
<dbReference type="PseudoCAP" id="PA4250"/>
<dbReference type="HOGENOM" id="CLU_139869_0_1_6"/>
<dbReference type="InParanoid" id="Q9HWE8"/>
<dbReference type="OrthoDB" id="9810484at2"/>
<dbReference type="PhylomeDB" id="Q9HWE8"/>
<dbReference type="BioCyc" id="PAER208964:G1FZ6-4323-MONOMER"/>
<dbReference type="PRO" id="PR:Q9HWE8"/>
<dbReference type="Proteomes" id="UP000002438">
    <property type="component" value="Chromosome"/>
</dbReference>
<dbReference type="GO" id="GO:0005737">
    <property type="term" value="C:cytoplasm"/>
    <property type="evidence" value="ECO:0007669"/>
    <property type="project" value="UniProtKB-ARBA"/>
</dbReference>
<dbReference type="GO" id="GO:0015935">
    <property type="term" value="C:small ribosomal subunit"/>
    <property type="evidence" value="ECO:0000318"/>
    <property type="project" value="GO_Central"/>
</dbReference>
<dbReference type="GO" id="GO:0019843">
    <property type="term" value="F:rRNA binding"/>
    <property type="evidence" value="ECO:0007669"/>
    <property type="project" value="UniProtKB-UniRule"/>
</dbReference>
<dbReference type="GO" id="GO:0003735">
    <property type="term" value="F:structural constituent of ribosome"/>
    <property type="evidence" value="ECO:0000318"/>
    <property type="project" value="GO_Central"/>
</dbReference>
<dbReference type="GO" id="GO:0006412">
    <property type="term" value="P:translation"/>
    <property type="evidence" value="ECO:0000318"/>
    <property type="project" value="GO_Central"/>
</dbReference>
<dbReference type="FunFam" id="1.10.287.1480:FF:000001">
    <property type="entry name" value="30S ribosomal protein S14"/>
    <property type="match status" value="1"/>
</dbReference>
<dbReference type="Gene3D" id="1.10.287.1480">
    <property type="match status" value="1"/>
</dbReference>
<dbReference type="HAMAP" id="MF_00537">
    <property type="entry name" value="Ribosomal_uS14_1"/>
    <property type="match status" value="1"/>
</dbReference>
<dbReference type="InterPro" id="IPR001209">
    <property type="entry name" value="Ribosomal_uS14"/>
</dbReference>
<dbReference type="InterPro" id="IPR023036">
    <property type="entry name" value="Ribosomal_uS14_bac/plastid"/>
</dbReference>
<dbReference type="InterPro" id="IPR018271">
    <property type="entry name" value="Ribosomal_uS14_CS"/>
</dbReference>
<dbReference type="NCBIfam" id="NF006477">
    <property type="entry name" value="PRK08881.1"/>
    <property type="match status" value="1"/>
</dbReference>
<dbReference type="PANTHER" id="PTHR19836">
    <property type="entry name" value="30S RIBOSOMAL PROTEIN S14"/>
    <property type="match status" value="1"/>
</dbReference>
<dbReference type="PANTHER" id="PTHR19836:SF19">
    <property type="entry name" value="SMALL RIBOSOMAL SUBUNIT PROTEIN US14M"/>
    <property type="match status" value="1"/>
</dbReference>
<dbReference type="Pfam" id="PF00253">
    <property type="entry name" value="Ribosomal_S14"/>
    <property type="match status" value="1"/>
</dbReference>
<dbReference type="SUPFAM" id="SSF57716">
    <property type="entry name" value="Glucocorticoid receptor-like (DNA-binding domain)"/>
    <property type="match status" value="1"/>
</dbReference>
<dbReference type="PROSITE" id="PS00527">
    <property type="entry name" value="RIBOSOMAL_S14"/>
    <property type="match status" value="1"/>
</dbReference>
<evidence type="ECO:0000255" key="1">
    <source>
        <dbReference type="HAMAP-Rule" id="MF_00537"/>
    </source>
</evidence>
<evidence type="ECO:0000305" key="2"/>
<proteinExistence type="evidence at protein level"/>
<sequence length="101" mass="11565">MAKESMKNRELKRQLTVAKYAKKRAELKAIIANPNSSAEERWNAQVALQKQPRDASASRLRNRCRLTGRPHGFYRKFGLSRNKLREAAMRGDVPGLVKASW</sequence>
<gene>
    <name evidence="1" type="primary">rpsN</name>
    <name type="ordered locus">PA4250</name>
</gene>
<accession>Q9HWE8</accession>
<keyword id="KW-0002">3D-structure</keyword>
<keyword id="KW-1185">Reference proteome</keyword>
<keyword id="KW-0687">Ribonucleoprotein</keyword>
<keyword id="KW-0689">Ribosomal protein</keyword>
<keyword id="KW-0694">RNA-binding</keyword>
<keyword id="KW-0699">rRNA-binding</keyword>
<organism>
    <name type="scientific">Pseudomonas aeruginosa (strain ATCC 15692 / DSM 22644 / CIP 104116 / JCM 14847 / LMG 12228 / 1C / PRS 101 / PAO1)</name>
    <dbReference type="NCBI Taxonomy" id="208964"/>
    <lineage>
        <taxon>Bacteria</taxon>
        <taxon>Pseudomonadati</taxon>
        <taxon>Pseudomonadota</taxon>
        <taxon>Gammaproteobacteria</taxon>
        <taxon>Pseudomonadales</taxon>
        <taxon>Pseudomonadaceae</taxon>
        <taxon>Pseudomonas</taxon>
    </lineage>
</organism>
<protein>
    <recommendedName>
        <fullName evidence="1">Small ribosomal subunit protein uS14</fullName>
    </recommendedName>
    <alternativeName>
        <fullName evidence="2">30S ribosomal protein S14</fullName>
    </alternativeName>
</protein>
<comment type="function">
    <text evidence="1">Binds 16S rRNA, required for the assembly of 30S particles and may also be responsible for determining the conformation of the 16S rRNA at the A site.</text>
</comment>
<comment type="subunit">
    <text evidence="1">Part of the 30S ribosomal subunit. Contacts proteins S3 and S10.</text>
</comment>
<comment type="similarity">
    <text evidence="1">Belongs to the universal ribosomal protein uS14 family.</text>
</comment>
<reference key="1">
    <citation type="journal article" date="2000" name="Nature">
        <title>Complete genome sequence of Pseudomonas aeruginosa PAO1, an opportunistic pathogen.</title>
        <authorList>
            <person name="Stover C.K."/>
            <person name="Pham X.-Q.T."/>
            <person name="Erwin A.L."/>
            <person name="Mizoguchi S.D."/>
            <person name="Warrener P."/>
            <person name="Hickey M.J."/>
            <person name="Brinkman F.S.L."/>
            <person name="Hufnagle W.O."/>
            <person name="Kowalik D.J."/>
            <person name="Lagrou M."/>
            <person name="Garber R.L."/>
            <person name="Goltry L."/>
            <person name="Tolentino E."/>
            <person name="Westbrock-Wadman S."/>
            <person name="Yuan Y."/>
            <person name="Brody L.L."/>
            <person name="Coulter S.N."/>
            <person name="Folger K.R."/>
            <person name="Kas A."/>
            <person name="Larbig K."/>
            <person name="Lim R.M."/>
            <person name="Smith K.A."/>
            <person name="Spencer D.H."/>
            <person name="Wong G.K.-S."/>
            <person name="Wu Z."/>
            <person name="Paulsen I.T."/>
            <person name="Reizer J."/>
            <person name="Saier M.H. Jr."/>
            <person name="Hancock R.E.W."/>
            <person name="Lory S."/>
            <person name="Olson M.V."/>
        </authorList>
    </citation>
    <scope>NUCLEOTIDE SEQUENCE [LARGE SCALE GENOMIC DNA]</scope>
    <source>
        <strain>ATCC 15692 / DSM 22644 / CIP 104116 / JCM 14847 / LMG 12228 / 1C / PRS 101 / PAO1</strain>
    </source>
</reference>
<feature type="chain" id="PRO_0000130917" description="Small ribosomal subunit protein uS14">
    <location>
        <begin position="1"/>
        <end position="101"/>
    </location>
</feature>